<comment type="function">
    <text evidence="1">Probably required for nitrate uptake under anoxic conditions. Also possibly involved in excretion of nitrite produced by the dissimilatory reduction of nitrate (By similarity).</text>
</comment>
<comment type="subcellular location">
    <subcellularLocation>
        <location evidence="3">Cell membrane</location>
        <topology evidence="3">Multi-pass membrane protein</topology>
    </subcellularLocation>
</comment>
<comment type="induction">
    <text evidence="1">Positively regulated by the two-component system NreB/NreC.</text>
</comment>
<comment type="similarity">
    <text evidence="3">Belongs to the major facilitator superfamily. Nitrate/nitrite porter (TC 2.A.1.8) family.</text>
</comment>
<accession>A6QJM8</accession>
<dbReference type="EMBL" id="AP009351">
    <property type="protein sequence ID" value="BAF68560.1"/>
    <property type="molecule type" value="Genomic_DNA"/>
</dbReference>
<dbReference type="RefSeq" id="WP_000278558.1">
    <property type="nucleotide sequence ID" value="NZ_JBBIAE010000004.1"/>
</dbReference>
<dbReference type="SMR" id="A6QJM8"/>
<dbReference type="KEGG" id="sae:NWMN_2288"/>
<dbReference type="HOGENOM" id="CLU_001265_14_0_9"/>
<dbReference type="Proteomes" id="UP000006386">
    <property type="component" value="Chromosome"/>
</dbReference>
<dbReference type="GO" id="GO:0005886">
    <property type="term" value="C:plasma membrane"/>
    <property type="evidence" value="ECO:0007669"/>
    <property type="project" value="UniProtKB-SubCell"/>
</dbReference>
<dbReference type="GO" id="GO:0015112">
    <property type="term" value="F:nitrate transmembrane transporter activity"/>
    <property type="evidence" value="ECO:0007669"/>
    <property type="project" value="InterPro"/>
</dbReference>
<dbReference type="GO" id="GO:0042128">
    <property type="term" value="P:nitrate assimilation"/>
    <property type="evidence" value="ECO:0007669"/>
    <property type="project" value="UniProtKB-KW"/>
</dbReference>
<dbReference type="CDD" id="cd17341">
    <property type="entry name" value="MFS_NRT2_like"/>
    <property type="match status" value="1"/>
</dbReference>
<dbReference type="Gene3D" id="1.20.1250.20">
    <property type="entry name" value="MFS general substrate transporter like domains"/>
    <property type="match status" value="2"/>
</dbReference>
<dbReference type="InterPro" id="IPR011701">
    <property type="entry name" value="MFS"/>
</dbReference>
<dbReference type="InterPro" id="IPR020846">
    <property type="entry name" value="MFS_dom"/>
</dbReference>
<dbReference type="InterPro" id="IPR036259">
    <property type="entry name" value="MFS_trans_sf"/>
</dbReference>
<dbReference type="InterPro" id="IPR044772">
    <property type="entry name" value="NO3_transporter"/>
</dbReference>
<dbReference type="PANTHER" id="PTHR23515">
    <property type="entry name" value="HIGH-AFFINITY NITRATE TRANSPORTER 2.3"/>
    <property type="match status" value="1"/>
</dbReference>
<dbReference type="Pfam" id="PF07690">
    <property type="entry name" value="MFS_1"/>
    <property type="match status" value="1"/>
</dbReference>
<dbReference type="SUPFAM" id="SSF103473">
    <property type="entry name" value="MFS general substrate transporter"/>
    <property type="match status" value="1"/>
</dbReference>
<dbReference type="PROSITE" id="PS50850">
    <property type="entry name" value="MFS"/>
    <property type="match status" value="1"/>
</dbReference>
<feature type="chain" id="PRO_0000349397" description="Probable nitrate transporter NarT">
    <location>
        <begin position="1"/>
        <end position="389"/>
    </location>
</feature>
<feature type="transmembrane region" description="Helical" evidence="2">
    <location>
        <begin position="14"/>
        <end position="34"/>
    </location>
</feature>
<feature type="transmembrane region" description="Helical" evidence="2">
    <location>
        <begin position="45"/>
        <end position="65"/>
    </location>
</feature>
<feature type="transmembrane region" description="Helical" evidence="2">
    <location>
        <begin position="69"/>
        <end position="89"/>
    </location>
</feature>
<feature type="transmembrane region" description="Helical" evidence="2">
    <location>
        <begin position="97"/>
        <end position="117"/>
    </location>
</feature>
<feature type="transmembrane region" description="Helical" evidence="2">
    <location>
        <begin position="139"/>
        <end position="159"/>
    </location>
</feature>
<feature type="transmembrane region" description="Helical" evidence="2">
    <location>
        <begin position="161"/>
        <end position="181"/>
    </location>
</feature>
<feature type="transmembrane region" description="Helical" evidence="2">
    <location>
        <begin position="211"/>
        <end position="231"/>
    </location>
</feature>
<feature type="transmembrane region" description="Helical" evidence="2">
    <location>
        <begin position="246"/>
        <end position="266"/>
    </location>
</feature>
<feature type="transmembrane region" description="Helical" evidence="2">
    <location>
        <begin position="268"/>
        <end position="288"/>
    </location>
</feature>
<feature type="transmembrane region" description="Helical" evidence="2">
    <location>
        <begin position="294"/>
        <end position="314"/>
    </location>
</feature>
<feature type="transmembrane region" description="Helical" evidence="2">
    <location>
        <begin position="331"/>
        <end position="351"/>
    </location>
</feature>
<feature type="transmembrane region" description="Helical" evidence="2">
    <location>
        <begin position="353"/>
        <end position="373"/>
    </location>
</feature>
<gene>
    <name type="primary">narT</name>
    <name type="synonym">narK</name>
    <name type="ordered locus">NWMN_2288</name>
</gene>
<name>NART_STAAE</name>
<organism>
    <name type="scientific">Staphylococcus aureus (strain Newman)</name>
    <dbReference type="NCBI Taxonomy" id="426430"/>
    <lineage>
        <taxon>Bacteria</taxon>
        <taxon>Bacillati</taxon>
        <taxon>Bacillota</taxon>
        <taxon>Bacilli</taxon>
        <taxon>Bacillales</taxon>
        <taxon>Staphylococcaceae</taxon>
        <taxon>Staphylococcus</taxon>
    </lineage>
</organism>
<proteinExistence type="inferred from homology"/>
<sequence>MYKTKGGFQLTLQTLSLVVGFMAWSIIAPLMPFIKQDVNVTEGQISIILAIPVILGSVLRVPFGYLTNIVGAKWVFFTSFIVLLFPIFFLSQAQTPGMLMASGFFLGVGGAIFSVGVTSVPKYFPKEKVGLANGIYGMGNIGTAVSSFLAPPIAGIIGWQTTVRSYLIIIALFALIMFIFGDTQERKIKVPLMAQMKTLSKNYKLYYLSYWYFITFGAFVAFGIFLPNYLVNHFGIDKVDAGIRSGVFIALATFLRPIGGILGDKFNAVKVLMIDFVVMIIGAIILGISDHIALFTVGCLTISICAGIGNGLIFKLVPSYFLNEAGSANGIVSMMGGLGGFFPPLVITYVANLTGSSHLAFIFLAVFGCIALFTMRHLYQKEYGSLKNG</sequence>
<reference key="1">
    <citation type="journal article" date="2008" name="J. Bacteriol.">
        <title>Genome sequence of Staphylococcus aureus strain Newman and comparative analysis of staphylococcal genomes: polymorphism and evolution of two major pathogenicity islands.</title>
        <authorList>
            <person name="Baba T."/>
            <person name="Bae T."/>
            <person name="Schneewind O."/>
            <person name="Takeuchi F."/>
            <person name="Hiramatsu K."/>
        </authorList>
    </citation>
    <scope>NUCLEOTIDE SEQUENCE [LARGE SCALE GENOMIC DNA]</scope>
    <source>
        <strain>Newman</strain>
    </source>
</reference>
<protein>
    <recommendedName>
        <fullName>Probable nitrate transporter NarT</fullName>
    </recommendedName>
</protein>
<keyword id="KW-1003">Cell membrane</keyword>
<keyword id="KW-0472">Membrane</keyword>
<keyword id="KW-0534">Nitrate assimilation</keyword>
<keyword id="KW-0812">Transmembrane</keyword>
<keyword id="KW-1133">Transmembrane helix</keyword>
<keyword id="KW-0813">Transport</keyword>
<evidence type="ECO:0000250" key="1"/>
<evidence type="ECO:0000255" key="2"/>
<evidence type="ECO:0000305" key="3"/>